<dbReference type="EMBL" id="CP000849">
    <property type="protein sequence ID" value="ABV79581.1"/>
    <property type="molecule type" value="Genomic_DNA"/>
</dbReference>
<dbReference type="RefSeq" id="WP_012152127.1">
    <property type="nucleotide sequence ID" value="NC_009883.1"/>
</dbReference>
<dbReference type="SMR" id="A8GXI1"/>
<dbReference type="KEGG" id="rbo:A1I_06315"/>
<dbReference type="HOGENOM" id="CLU_036856_0_1_5"/>
<dbReference type="GO" id="GO:0005737">
    <property type="term" value="C:cytoplasm"/>
    <property type="evidence" value="ECO:0007669"/>
    <property type="project" value="UniProtKB-SubCell"/>
</dbReference>
<dbReference type="GO" id="GO:0016149">
    <property type="term" value="F:translation release factor activity, codon specific"/>
    <property type="evidence" value="ECO:0007669"/>
    <property type="project" value="UniProtKB-UniRule"/>
</dbReference>
<dbReference type="FunFam" id="3.30.160.20:FF:000004">
    <property type="entry name" value="Peptide chain release factor 1"/>
    <property type="match status" value="1"/>
</dbReference>
<dbReference type="FunFam" id="3.30.70.1660:FF:000002">
    <property type="entry name" value="Peptide chain release factor 1"/>
    <property type="match status" value="1"/>
</dbReference>
<dbReference type="FunFam" id="3.30.70.1660:FF:000004">
    <property type="entry name" value="Peptide chain release factor 1"/>
    <property type="match status" value="1"/>
</dbReference>
<dbReference type="Gene3D" id="3.30.160.20">
    <property type="match status" value="1"/>
</dbReference>
<dbReference type="Gene3D" id="3.30.70.1660">
    <property type="match status" value="1"/>
</dbReference>
<dbReference type="Gene3D" id="6.10.140.1950">
    <property type="match status" value="1"/>
</dbReference>
<dbReference type="HAMAP" id="MF_00093">
    <property type="entry name" value="Rel_fac_1"/>
    <property type="match status" value="1"/>
</dbReference>
<dbReference type="InterPro" id="IPR005139">
    <property type="entry name" value="PCRF"/>
</dbReference>
<dbReference type="InterPro" id="IPR000352">
    <property type="entry name" value="Pep_chain_release_fac_I"/>
</dbReference>
<dbReference type="InterPro" id="IPR045853">
    <property type="entry name" value="Pep_chain_release_fac_I_sf"/>
</dbReference>
<dbReference type="InterPro" id="IPR050057">
    <property type="entry name" value="Prokaryotic/Mito_RF"/>
</dbReference>
<dbReference type="InterPro" id="IPR004373">
    <property type="entry name" value="RF-1"/>
</dbReference>
<dbReference type="NCBIfam" id="TIGR00019">
    <property type="entry name" value="prfA"/>
    <property type="match status" value="1"/>
</dbReference>
<dbReference type="NCBIfam" id="NF001859">
    <property type="entry name" value="PRK00591.1"/>
    <property type="match status" value="1"/>
</dbReference>
<dbReference type="PANTHER" id="PTHR43804">
    <property type="entry name" value="LD18447P"/>
    <property type="match status" value="1"/>
</dbReference>
<dbReference type="PANTHER" id="PTHR43804:SF7">
    <property type="entry name" value="LD18447P"/>
    <property type="match status" value="1"/>
</dbReference>
<dbReference type="Pfam" id="PF03462">
    <property type="entry name" value="PCRF"/>
    <property type="match status" value="1"/>
</dbReference>
<dbReference type="Pfam" id="PF00472">
    <property type="entry name" value="RF-1"/>
    <property type="match status" value="1"/>
</dbReference>
<dbReference type="SMART" id="SM00937">
    <property type="entry name" value="PCRF"/>
    <property type="match status" value="1"/>
</dbReference>
<dbReference type="SUPFAM" id="SSF75620">
    <property type="entry name" value="Release factor"/>
    <property type="match status" value="1"/>
</dbReference>
<dbReference type="PROSITE" id="PS00745">
    <property type="entry name" value="RF_PROK_I"/>
    <property type="match status" value="1"/>
</dbReference>
<name>RF1_RICB8</name>
<protein>
    <recommendedName>
        <fullName evidence="1">Peptide chain release factor 1</fullName>
        <shortName evidence="1">RF-1</shortName>
    </recommendedName>
</protein>
<sequence length="357" mass="40218">MNISSFSDNLTKILGKYEDLSEKLSSGIGGEEFVKASKEYADLEDIVQKIKEYNKAKAELEEANNFKQEPSLDKATLEMIEEEIRNLEDSLPTLERSVKIALLPKDEADSKSAIIEIRAGTGGEEAALFAAKLFNMYQRYAELKGWRFEILSIDETGIGGYKEVSASIKGKDVFSKLKFESGVHRVQRVPETESQGRIHTSAATVAVLPEVEDVDIKLEEKDLRIDTYRASGAGGQHVNTTDSAVRITHIPTGITVALQDEKSQHKNKAKALKILRARIYEEERRKKDQERANNRREQIGSGDRSERIRTYNFPQGRVSDHRINLTLYKIDEVINGQLDEFIEALIANDEAKKLSDI</sequence>
<organism>
    <name type="scientific">Rickettsia bellii (strain OSU 85-389)</name>
    <dbReference type="NCBI Taxonomy" id="391896"/>
    <lineage>
        <taxon>Bacteria</taxon>
        <taxon>Pseudomonadati</taxon>
        <taxon>Pseudomonadota</taxon>
        <taxon>Alphaproteobacteria</taxon>
        <taxon>Rickettsiales</taxon>
        <taxon>Rickettsiaceae</taxon>
        <taxon>Rickettsieae</taxon>
        <taxon>Rickettsia</taxon>
        <taxon>belli group</taxon>
    </lineage>
</organism>
<comment type="function">
    <text evidence="1">Peptide chain release factor 1 directs the termination of translation in response to the peptide chain termination codons UAG and UAA.</text>
</comment>
<comment type="subcellular location">
    <subcellularLocation>
        <location evidence="1">Cytoplasm</location>
    </subcellularLocation>
</comment>
<comment type="PTM">
    <text evidence="1">Methylated by PrmC. Methylation increases the termination efficiency of RF1.</text>
</comment>
<comment type="similarity">
    <text evidence="1">Belongs to the prokaryotic/mitochondrial release factor family.</text>
</comment>
<proteinExistence type="inferred from homology"/>
<keyword id="KW-0963">Cytoplasm</keyword>
<keyword id="KW-0488">Methylation</keyword>
<keyword id="KW-0648">Protein biosynthesis</keyword>
<evidence type="ECO:0000255" key="1">
    <source>
        <dbReference type="HAMAP-Rule" id="MF_00093"/>
    </source>
</evidence>
<evidence type="ECO:0000256" key="2">
    <source>
        <dbReference type="SAM" id="MobiDB-lite"/>
    </source>
</evidence>
<accession>A8GXI1</accession>
<feature type="chain" id="PRO_1000004942" description="Peptide chain release factor 1">
    <location>
        <begin position="1"/>
        <end position="357"/>
    </location>
</feature>
<feature type="region of interest" description="Disordered" evidence="2">
    <location>
        <begin position="283"/>
        <end position="313"/>
    </location>
</feature>
<feature type="compositionally biased region" description="Basic and acidic residues" evidence="2">
    <location>
        <begin position="283"/>
        <end position="309"/>
    </location>
</feature>
<feature type="modified residue" description="N5-methylglutamine" evidence="1">
    <location>
        <position position="236"/>
    </location>
</feature>
<reference key="1">
    <citation type="submission" date="2007-09" db="EMBL/GenBank/DDBJ databases">
        <title>Complete genome sequencing of Rickettsia bellii.</title>
        <authorList>
            <person name="Madan A."/>
            <person name="Lee H."/>
            <person name="Madan A."/>
            <person name="Yoon J.-G."/>
            <person name="Ryu G.-Y."/>
            <person name="Dasch G."/>
            <person name="Ereemeva M."/>
        </authorList>
    </citation>
    <scope>NUCLEOTIDE SEQUENCE [LARGE SCALE GENOMIC DNA]</scope>
    <source>
        <strain>OSU 85-389</strain>
    </source>
</reference>
<gene>
    <name evidence="1" type="primary">prfA</name>
    <name type="ordered locus">A1I_06315</name>
</gene>